<keyword id="KW-0010">Activator</keyword>
<keyword id="KW-0175">Coiled coil</keyword>
<keyword id="KW-0963">Cytoplasm</keyword>
<keyword id="KW-0804">Transcription</keyword>
<keyword id="KW-0805">Transcription regulation</keyword>
<evidence type="ECO:0000255" key="1">
    <source>
        <dbReference type="HAMAP-Rule" id="MF_01178"/>
    </source>
</evidence>
<sequence>MTLPSGHPKSRLIKKFTALGPYIREGQCEDNRFFFDCLAVCVNVKPAPEKREFWGWWMELEAQEKRFTYRYQFGLFDKEGNWTVVPINETEVVERLEYTLREFHEKLRDLLISMELALEPSDDFNDEPVKLSA</sequence>
<comment type="function">
    <text evidence="1">Binds to the sigma-S subunit of RNA polymerase, activating expression of sigma-S-regulated genes. Stimulates RNA polymerase holoenzyme formation and may bind to several other sigma factors, such as sigma-70 and sigma-32.</text>
</comment>
<comment type="subcellular location">
    <subcellularLocation>
        <location evidence="1">Cytoplasm</location>
    </subcellularLocation>
</comment>
<comment type="similarity">
    <text evidence="1">Belongs to the Crl family.</text>
</comment>
<accession>Q8XH11</accession>
<accession>Q7ANI3</accession>
<gene>
    <name evidence="1" type="primary">crl</name>
    <name type="ordered locus">STY0364</name>
    <name type="ordered locus">t2531</name>
</gene>
<proteinExistence type="inferred from homology"/>
<dbReference type="EMBL" id="AE014613">
    <property type="protein sequence ID" value="AAO70115.1"/>
    <property type="molecule type" value="Genomic_DNA"/>
</dbReference>
<dbReference type="EMBL" id="AL513382">
    <property type="protein sequence ID" value="CAD08789.1"/>
    <property type="molecule type" value="Genomic_DNA"/>
</dbReference>
<dbReference type="RefSeq" id="NP_454931.1">
    <property type="nucleotide sequence ID" value="NC_003198.1"/>
</dbReference>
<dbReference type="RefSeq" id="WP_000174696.1">
    <property type="nucleotide sequence ID" value="NZ_WSUR01000017.1"/>
</dbReference>
<dbReference type="SMR" id="Q8XH11"/>
<dbReference type="IntAct" id="Q8XH11">
    <property type="interactions" value="1"/>
</dbReference>
<dbReference type="STRING" id="220341.gene:17584393"/>
<dbReference type="KEGG" id="stt:t2531"/>
<dbReference type="KEGG" id="sty:STY0364"/>
<dbReference type="PATRIC" id="fig|220341.7.peg.358"/>
<dbReference type="eggNOG" id="ENOG502ZQ8E">
    <property type="taxonomic scope" value="Bacteria"/>
</dbReference>
<dbReference type="HOGENOM" id="CLU_136773_0_0_6"/>
<dbReference type="OMA" id="FWGWWLE"/>
<dbReference type="OrthoDB" id="6428303at2"/>
<dbReference type="Proteomes" id="UP000000541">
    <property type="component" value="Chromosome"/>
</dbReference>
<dbReference type="Proteomes" id="UP000002670">
    <property type="component" value="Chromosome"/>
</dbReference>
<dbReference type="GO" id="GO:0005737">
    <property type="term" value="C:cytoplasm"/>
    <property type="evidence" value="ECO:0007669"/>
    <property type="project" value="UniProtKB-SubCell"/>
</dbReference>
<dbReference type="GO" id="GO:0045893">
    <property type="term" value="P:positive regulation of DNA-templated transcription"/>
    <property type="evidence" value="ECO:0007669"/>
    <property type="project" value="UniProtKB-UniRule"/>
</dbReference>
<dbReference type="Gene3D" id="3.30.310.230">
    <property type="entry name" value="Sigma factor-binding protein Crl monomer"/>
    <property type="match status" value="1"/>
</dbReference>
<dbReference type="HAMAP" id="MF_01178">
    <property type="entry name" value="Crl"/>
    <property type="match status" value="1"/>
</dbReference>
<dbReference type="InterPro" id="IPR009986">
    <property type="entry name" value="Tscrpt_reg_Crl"/>
</dbReference>
<dbReference type="InterPro" id="IPR038208">
    <property type="entry name" value="Tscrpt_reg_Crl_sf"/>
</dbReference>
<dbReference type="NCBIfam" id="NF008217">
    <property type="entry name" value="PRK10984.1"/>
    <property type="match status" value="1"/>
</dbReference>
<dbReference type="Pfam" id="PF07417">
    <property type="entry name" value="Crl"/>
    <property type="match status" value="1"/>
</dbReference>
<feature type="chain" id="PRO_0000268903" description="Sigma factor-binding protein Crl">
    <location>
        <begin position="1"/>
        <end position="133"/>
    </location>
</feature>
<feature type="region of interest" description="Essential for activity" evidence="1">
    <location>
        <begin position="99"/>
        <end position="122"/>
    </location>
</feature>
<feature type="coiled-coil region" evidence="1">
    <location>
        <begin position="90"/>
        <end position="111"/>
    </location>
</feature>
<name>CRL_SALTI</name>
<protein>
    <recommendedName>
        <fullName evidence="1">Sigma factor-binding protein Crl</fullName>
    </recommendedName>
</protein>
<organism>
    <name type="scientific">Salmonella typhi</name>
    <dbReference type="NCBI Taxonomy" id="90370"/>
    <lineage>
        <taxon>Bacteria</taxon>
        <taxon>Pseudomonadati</taxon>
        <taxon>Pseudomonadota</taxon>
        <taxon>Gammaproteobacteria</taxon>
        <taxon>Enterobacterales</taxon>
        <taxon>Enterobacteriaceae</taxon>
        <taxon>Salmonella</taxon>
    </lineage>
</organism>
<reference key="1">
    <citation type="journal article" date="2003" name="J. Bacteriol.">
        <title>Comparative genomics of Salmonella enterica serovar Typhi strains Ty2 and CT18.</title>
        <authorList>
            <person name="Deng W."/>
            <person name="Liou S.-R."/>
            <person name="Plunkett G. III"/>
            <person name="Mayhew G.F."/>
            <person name="Rose D.J."/>
            <person name="Burland V."/>
            <person name="Kodoyianni V."/>
            <person name="Schwartz D.C."/>
            <person name="Blattner F.R."/>
        </authorList>
    </citation>
    <scope>NUCLEOTIDE SEQUENCE [LARGE SCALE GENOMIC DNA]</scope>
    <source>
        <strain>ATCC 700931 / Ty2</strain>
    </source>
</reference>
<reference key="2">
    <citation type="journal article" date="2001" name="Nature">
        <title>Complete genome sequence of a multiple drug resistant Salmonella enterica serovar Typhi CT18.</title>
        <authorList>
            <person name="Parkhill J."/>
            <person name="Dougan G."/>
            <person name="James K.D."/>
            <person name="Thomson N.R."/>
            <person name="Pickard D."/>
            <person name="Wain J."/>
            <person name="Churcher C.M."/>
            <person name="Mungall K.L."/>
            <person name="Bentley S.D."/>
            <person name="Holden M.T.G."/>
            <person name="Sebaihia M."/>
            <person name="Baker S."/>
            <person name="Basham D."/>
            <person name="Brooks K."/>
            <person name="Chillingworth T."/>
            <person name="Connerton P."/>
            <person name="Cronin A."/>
            <person name="Davis P."/>
            <person name="Davies R.M."/>
            <person name="Dowd L."/>
            <person name="White N."/>
            <person name="Farrar J."/>
            <person name="Feltwell T."/>
            <person name="Hamlin N."/>
            <person name="Haque A."/>
            <person name="Hien T.T."/>
            <person name="Holroyd S."/>
            <person name="Jagels K."/>
            <person name="Krogh A."/>
            <person name="Larsen T.S."/>
            <person name="Leather S."/>
            <person name="Moule S."/>
            <person name="O'Gaora P."/>
            <person name="Parry C."/>
            <person name="Quail M.A."/>
            <person name="Rutherford K.M."/>
            <person name="Simmonds M."/>
            <person name="Skelton J."/>
            <person name="Stevens K."/>
            <person name="Whitehead S."/>
            <person name="Barrell B.G."/>
        </authorList>
    </citation>
    <scope>NUCLEOTIDE SEQUENCE [LARGE SCALE GENOMIC DNA]</scope>
    <source>
        <strain>CT18</strain>
    </source>
</reference>